<reference key="1">
    <citation type="journal article" date="2008" name="BMC Genomics">
        <title>The genome of Aeromonas salmonicida subsp. salmonicida A449: insights into the evolution of a fish pathogen.</title>
        <authorList>
            <person name="Reith M.E."/>
            <person name="Singh R.K."/>
            <person name="Curtis B."/>
            <person name="Boyd J.M."/>
            <person name="Bouevitch A."/>
            <person name="Kimball J."/>
            <person name="Munholland J."/>
            <person name="Murphy C."/>
            <person name="Sarty D."/>
            <person name="Williams J."/>
            <person name="Nash J.H."/>
            <person name="Johnson S.C."/>
            <person name="Brown L.L."/>
        </authorList>
    </citation>
    <scope>NUCLEOTIDE SEQUENCE [LARGE SCALE GENOMIC DNA]</scope>
    <source>
        <strain>A449</strain>
    </source>
</reference>
<feature type="chain" id="PRO_1000054421" description="Large ribosomal subunit protein uL15">
    <location>
        <begin position="1"/>
        <end position="145"/>
    </location>
</feature>
<feature type="region of interest" description="Disordered" evidence="2">
    <location>
        <begin position="1"/>
        <end position="50"/>
    </location>
</feature>
<feature type="compositionally biased region" description="Gly residues" evidence="2">
    <location>
        <begin position="22"/>
        <end position="35"/>
    </location>
</feature>
<gene>
    <name evidence="1" type="primary">rplO</name>
    <name type="ordered locus">ASA_4068</name>
</gene>
<accession>A4SSY7</accession>
<comment type="function">
    <text evidence="1">Binds to the 23S rRNA.</text>
</comment>
<comment type="subunit">
    <text evidence="1">Part of the 50S ribosomal subunit.</text>
</comment>
<comment type="similarity">
    <text evidence="1">Belongs to the universal ribosomal protein uL15 family.</text>
</comment>
<dbReference type="EMBL" id="CP000644">
    <property type="protein sequence ID" value="ABO92009.1"/>
    <property type="molecule type" value="Genomic_DNA"/>
</dbReference>
<dbReference type="RefSeq" id="WP_005319708.1">
    <property type="nucleotide sequence ID" value="NC_009348.1"/>
</dbReference>
<dbReference type="SMR" id="A4SSY7"/>
<dbReference type="STRING" id="29491.GCA_000820065_03484"/>
<dbReference type="GeneID" id="92721517"/>
<dbReference type="KEGG" id="asa:ASA_4068"/>
<dbReference type="eggNOG" id="COG0200">
    <property type="taxonomic scope" value="Bacteria"/>
</dbReference>
<dbReference type="HOGENOM" id="CLU_055188_4_2_6"/>
<dbReference type="Proteomes" id="UP000000225">
    <property type="component" value="Chromosome"/>
</dbReference>
<dbReference type="GO" id="GO:0022625">
    <property type="term" value="C:cytosolic large ribosomal subunit"/>
    <property type="evidence" value="ECO:0007669"/>
    <property type="project" value="TreeGrafter"/>
</dbReference>
<dbReference type="GO" id="GO:0019843">
    <property type="term" value="F:rRNA binding"/>
    <property type="evidence" value="ECO:0007669"/>
    <property type="project" value="UniProtKB-UniRule"/>
</dbReference>
<dbReference type="GO" id="GO:0003735">
    <property type="term" value="F:structural constituent of ribosome"/>
    <property type="evidence" value="ECO:0007669"/>
    <property type="project" value="InterPro"/>
</dbReference>
<dbReference type="GO" id="GO:0006412">
    <property type="term" value="P:translation"/>
    <property type="evidence" value="ECO:0007669"/>
    <property type="project" value="UniProtKB-UniRule"/>
</dbReference>
<dbReference type="Gene3D" id="3.100.10.10">
    <property type="match status" value="1"/>
</dbReference>
<dbReference type="HAMAP" id="MF_01341">
    <property type="entry name" value="Ribosomal_uL15"/>
    <property type="match status" value="1"/>
</dbReference>
<dbReference type="InterPro" id="IPR030878">
    <property type="entry name" value="Ribosomal_uL15"/>
</dbReference>
<dbReference type="InterPro" id="IPR021131">
    <property type="entry name" value="Ribosomal_uL15/eL18"/>
</dbReference>
<dbReference type="InterPro" id="IPR036227">
    <property type="entry name" value="Ribosomal_uL15/eL18_sf"/>
</dbReference>
<dbReference type="InterPro" id="IPR005749">
    <property type="entry name" value="Ribosomal_uL15_bac-type"/>
</dbReference>
<dbReference type="InterPro" id="IPR001196">
    <property type="entry name" value="Ribosomal_uL15_CS"/>
</dbReference>
<dbReference type="NCBIfam" id="TIGR01071">
    <property type="entry name" value="rplO_bact"/>
    <property type="match status" value="1"/>
</dbReference>
<dbReference type="PANTHER" id="PTHR12934">
    <property type="entry name" value="50S RIBOSOMAL PROTEIN L15"/>
    <property type="match status" value="1"/>
</dbReference>
<dbReference type="PANTHER" id="PTHR12934:SF11">
    <property type="entry name" value="LARGE RIBOSOMAL SUBUNIT PROTEIN UL15M"/>
    <property type="match status" value="1"/>
</dbReference>
<dbReference type="Pfam" id="PF00828">
    <property type="entry name" value="Ribosomal_L27A"/>
    <property type="match status" value="1"/>
</dbReference>
<dbReference type="SUPFAM" id="SSF52080">
    <property type="entry name" value="Ribosomal proteins L15p and L18e"/>
    <property type="match status" value="1"/>
</dbReference>
<dbReference type="PROSITE" id="PS00475">
    <property type="entry name" value="RIBOSOMAL_L15"/>
    <property type="match status" value="1"/>
</dbReference>
<keyword id="KW-0687">Ribonucleoprotein</keyword>
<keyword id="KW-0689">Ribosomal protein</keyword>
<keyword id="KW-0694">RNA-binding</keyword>
<keyword id="KW-0699">rRNA-binding</keyword>
<proteinExistence type="inferred from homology"/>
<organism>
    <name type="scientific">Aeromonas salmonicida (strain A449)</name>
    <dbReference type="NCBI Taxonomy" id="382245"/>
    <lineage>
        <taxon>Bacteria</taxon>
        <taxon>Pseudomonadati</taxon>
        <taxon>Pseudomonadota</taxon>
        <taxon>Gammaproteobacteria</taxon>
        <taxon>Aeromonadales</taxon>
        <taxon>Aeromonadaceae</taxon>
        <taxon>Aeromonas</taxon>
    </lineage>
</organism>
<protein>
    <recommendedName>
        <fullName evidence="1">Large ribosomal subunit protein uL15</fullName>
    </recommendedName>
    <alternativeName>
        <fullName evidence="3">50S ribosomal protein L15</fullName>
    </alternativeName>
</protein>
<name>RL15_AERS4</name>
<evidence type="ECO:0000255" key="1">
    <source>
        <dbReference type="HAMAP-Rule" id="MF_01341"/>
    </source>
</evidence>
<evidence type="ECO:0000256" key="2">
    <source>
        <dbReference type="SAM" id="MobiDB-lite"/>
    </source>
</evidence>
<evidence type="ECO:0000305" key="3"/>
<sequence>MRLNTLSPAAGSKPEKQRRGRGIGSGLGKTGGRGVKGQTSRSGGGKVRAGFEGGQMPLKIRLPKFGFFSRKSLVSAEVRLNEIAMVEGDVVDLSTLKQAGVVTKNIVFAKVVLSGNIDRAVTVRGVSVTKGARAAIEAAGGKIEE</sequence>